<dbReference type="EMBL" id="CP000056">
    <property type="protein sequence ID" value="AAX72001.1"/>
    <property type="molecule type" value="Genomic_DNA"/>
</dbReference>
<dbReference type="SMR" id="Q48TF9"/>
<dbReference type="KEGG" id="spb:M28_Spy0888"/>
<dbReference type="HOGENOM" id="CLU_129218_1_1_9"/>
<dbReference type="Gene3D" id="1.10.10.10">
    <property type="entry name" value="Winged helix-like DNA-binding domain superfamily/Winged helix DNA-binding domain"/>
    <property type="match status" value="1"/>
</dbReference>
<dbReference type="HAMAP" id="MF_00245">
    <property type="entry name" value="UPF0122"/>
    <property type="match status" value="1"/>
</dbReference>
<dbReference type="InterPro" id="IPR013324">
    <property type="entry name" value="RNA_pol_sigma_r3/r4-like"/>
</dbReference>
<dbReference type="InterPro" id="IPR007394">
    <property type="entry name" value="UPF0122"/>
</dbReference>
<dbReference type="InterPro" id="IPR054831">
    <property type="entry name" value="UPF0122_fam_protein"/>
</dbReference>
<dbReference type="InterPro" id="IPR036388">
    <property type="entry name" value="WH-like_DNA-bd_sf"/>
</dbReference>
<dbReference type="NCBIfam" id="NF001066">
    <property type="entry name" value="PRK00118.1-1"/>
    <property type="match status" value="1"/>
</dbReference>
<dbReference type="NCBIfam" id="NF001068">
    <property type="entry name" value="PRK00118.1-4"/>
    <property type="match status" value="1"/>
</dbReference>
<dbReference type="NCBIfam" id="NF001070">
    <property type="entry name" value="PRK00118.1-6"/>
    <property type="match status" value="1"/>
</dbReference>
<dbReference type="NCBIfam" id="NF045758">
    <property type="entry name" value="YlxM"/>
    <property type="match status" value="1"/>
</dbReference>
<dbReference type="PANTHER" id="PTHR40083">
    <property type="entry name" value="UPF0122 PROTEIN CBO2450/CLC_2298"/>
    <property type="match status" value="1"/>
</dbReference>
<dbReference type="PANTHER" id="PTHR40083:SF1">
    <property type="entry name" value="UPF0122 PROTEIN YLXM"/>
    <property type="match status" value="1"/>
</dbReference>
<dbReference type="Pfam" id="PF04297">
    <property type="entry name" value="UPF0122"/>
    <property type="match status" value="1"/>
</dbReference>
<dbReference type="SUPFAM" id="SSF88659">
    <property type="entry name" value="Sigma3 and sigma4 domains of RNA polymerase sigma factors"/>
    <property type="match status" value="1"/>
</dbReference>
<accession>Q48TF9</accession>
<gene>
    <name type="ordered locus">M28_Spy0888</name>
</gene>
<reference key="1">
    <citation type="journal article" date="2005" name="J. Infect. Dis.">
        <title>Genome sequence of a serotype M28 strain of group A Streptococcus: potential new insights into puerperal sepsis and bacterial disease specificity.</title>
        <authorList>
            <person name="Green N.M."/>
            <person name="Zhang S."/>
            <person name="Porcella S.F."/>
            <person name="Nagiec M.J."/>
            <person name="Barbian K.D."/>
            <person name="Beres S.B."/>
            <person name="Lefebvre R.B."/>
            <person name="Musser J.M."/>
        </authorList>
    </citation>
    <scope>NUCLEOTIDE SEQUENCE [LARGE SCALE GENOMIC DNA]</scope>
    <source>
        <strain>MGAS6180</strain>
    </source>
</reference>
<feature type="chain" id="PRO_1000012549" description="UPF0122 protein M28_Spy0888">
    <location>
        <begin position="1"/>
        <end position="113"/>
    </location>
</feature>
<name>Y888_STRPM</name>
<protein>
    <recommendedName>
        <fullName evidence="1">UPF0122 protein M28_Spy0888</fullName>
    </recommendedName>
</protein>
<evidence type="ECO:0000255" key="1">
    <source>
        <dbReference type="HAMAP-Rule" id="MF_00245"/>
    </source>
</evidence>
<comment type="function">
    <text evidence="1">Might take part in the signal recognition particle (SRP) pathway. This is inferred from the conservation of its genetic proximity to ftsY/ffh. May be a regulatory protein.</text>
</comment>
<comment type="similarity">
    <text evidence="1">Belongs to the UPF0122 family.</text>
</comment>
<organism>
    <name type="scientific">Streptococcus pyogenes serotype M28 (strain MGAS6180)</name>
    <dbReference type="NCBI Taxonomy" id="319701"/>
    <lineage>
        <taxon>Bacteria</taxon>
        <taxon>Bacillati</taxon>
        <taxon>Bacillota</taxon>
        <taxon>Bacilli</taxon>
        <taxon>Lactobacillales</taxon>
        <taxon>Streptococcaceae</taxon>
        <taxon>Streptococcus</taxon>
    </lineage>
</organism>
<proteinExistence type="inferred from homology"/>
<sequence length="113" mass="13590">MNIMEIEKTNRMNALFEFYAALLTDKQMNYIELYYADDYSLAEIADEFGVSRQAVYDNIKRTEKILETYEMKLHMYSDYVVRSEIFDDMIAHYPHDEYLQEKISILTSIDNRE</sequence>